<accession>P43888</accession>
<dbReference type="EC" id="2.3.1.191" evidence="1"/>
<dbReference type="EMBL" id="L42023">
    <property type="protein sequence ID" value="AAC22573.1"/>
    <property type="molecule type" value="Genomic_DNA"/>
</dbReference>
<dbReference type="PIR" id="D64102">
    <property type="entry name" value="D64102"/>
</dbReference>
<dbReference type="RefSeq" id="NP_439075.1">
    <property type="nucleotide sequence ID" value="NC_000907.1"/>
</dbReference>
<dbReference type="SMR" id="P43888"/>
<dbReference type="STRING" id="71421.HI_0915"/>
<dbReference type="EnsemblBacteria" id="AAC22573">
    <property type="protein sequence ID" value="AAC22573"/>
    <property type="gene ID" value="HI_0915"/>
</dbReference>
<dbReference type="KEGG" id="hin:HI_0915"/>
<dbReference type="PATRIC" id="fig|71421.8.peg.956"/>
<dbReference type="eggNOG" id="COG1044">
    <property type="taxonomic scope" value="Bacteria"/>
</dbReference>
<dbReference type="HOGENOM" id="CLU_049865_0_1_6"/>
<dbReference type="OrthoDB" id="9784739at2"/>
<dbReference type="PhylomeDB" id="P43888"/>
<dbReference type="BioCyc" id="HINF71421:G1GJ1-954-MONOMER"/>
<dbReference type="UniPathway" id="UPA00973"/>
<dbReference type="Proteomes" id="UP000000579">
    <property type="component" value="Chromosome"/>
</dbReference>
<dbReference type="GO" id="GO:0016020">
    <property type="term" value="C:membrane"/>
    <property type="evidence" value="ECO:0007669"/>
    <property type="project" value="GOC"/>
</dbReference>
<dbReference type="GO" id="GO:0016410">
    <property type="term" value="F:N-acyltransferase activity"/>
    <property type="evidence" value="ECO:0007669"/>
    <property type="project" value="InterPro"/>
</dbReference>
<dbReference type="GO" id="GO:0009245">
    <property type="term" value="P:lipid A biosynthetic process"/>
    <property type="evidence" value="ECO:0007669"/>
    <property type="project" value="UniProtKB-UniRule"/>
</dbReference>
<dbReference type="CDD" id="cd03352">
    <property type="entry name" value="LbH_LpxD"/>
    <property type="match status" value="1"/>
</dbReference>
<dbReference type="FunFam" id="2.160.10.10:FF:000005">
    <property type="entry name" value="UDP-3-O-(3-hydroxymyristoyl)glucosamine N-acyltransferase"/>
    <property type="match status" value="1"/>
</dbReference>
<dbReference type="Gene3D" id="1.20.5.170">
    <property type="match status" value="1"/>
</dbReference>
<dbReference type="Gene3D" id="2.160.10.10">
    <property type="entry name" value="Hexapeptide repeat proteins"/>
    <property type="match status" value="1"/>
</dbReference>
<dbReference type="Gene3D" id="3.40.1390.10">
    <property type="entry name" value="MurE/MurF, N-terminal domain"/>
    <property type="match status" value="1"/>
</dbReference>
<dbReference type="HAMAP" id="MF_00523">
    <property type="entry name" value="LpxD"/>
    <property type="match status" value="1"/>
</dbReference>
<dbReference type="InterPro" id="IPR001451">
    <property type="entry name" value="Hexapep"/>
</dbReference>
<dbReference type="InterPro" id="IPR018357">
    <property type="entry name" value="Hexapep_transf_CS"/>
</dbReference>
<dbReference type="InterPro" id="IPR007691">
    <property type="entry name" value="LpxD"/>
</dbReference>
<dbReference type="InterPro" id="IPR011004">
    <property type="entry name" value="Trimer_LpxA-like_sf"/>
</dbReference>
<dbReference type="InterPro" id="IPR020573">
    <property type="entry name" value="UDP_GlcNAc_AcTrfase_non-rep"/>
</dbReference>
<dbReference type="NCBIfam" id="TIGR01853">
    <property type="entry name" value="lipid_A_lpxD"/>
    <property type="match status" value="1"/>
</dbReference>
<dbReference type="NCBIfam" id="NF002060">
    <property type="entry name" value="PRK00892.1"/>
    <property type="match status" value="1"/>
</dbReference>
<dbReference type="PANTHER" id="PTHR43378">
    <property type="entry name" value="UDP-3-O-ACYLGLUCOSAMINE N-ACYLTRANSFERASE"/>
    <property type="match status" value="1"/>
</dbReference>
<dbReference type="PANTHER" id="PTHR43378:SF2">
    <property type="entry name" value="UDP-3-O-ACYLGLUCOSAMINE N-ACYLTRANSFERASE 1, MITOCHONDRIAL-RELATED"/>
    <property type="match status" value="1"/>
</dbReference>
<dbReference type="Pfam" id="PF00132">
    <property type="entry name" value="Hexapep"/>
    <property type="match status" value="2"/>
</dbReference>
<dbReference type="Pfam" id="PF14602">
    <property type="entry name" value="Hexapep_2"/>
    <property type="match status" value="1"/>
</dbReference>
<dbReference type="Pfam" id="PF04613">
    <property type="entry name" value="LpxD"/>
    <property type="match status" value="1"/>
</dbReference>
<dbReference type="SUPFAM" id="SSF51161">
    <property type="entry name" value="Trimeric LpxA-like enzymes"/>
    <property type="match status" value="1"/>
</dbReference>
<dbReference type="PROSITE" id="PS00101">
    <property type="entry name" value="HEXAPEP_TRANSFERASES"/>
    <property type="match status" value="3"/>
</dbReference>
<evidence type="ECO:0000255" key="1">
    <source>
        <dbReference type="HAMAP-Rule" id="MF_00523"/>
    </source>
</evidence>
<organism>
    <name type="scientific">Haemophilus influenzae (strain ATCC 51907 / DSM 11121 / KW20 / Rd)</name>
    <dbReference type="NCBI Taxonomy" id="71421"/>
    <lineage>
        <taxon>Bacteria</taxon>
        <taxon>Pseudomonadati</taxon>
        <taxon>Pseudomonadota</taxon>
        <taxon>Gammaproteobacteria</taxon>
        <taxon>Pasteurellales</taxon>
        <taxon>Pasteurellaceae</taxon>
        <taxon>Haemophilus</taxon>
    </lineage>
</organism>
<proteinExistence type="inferred from homology"/>
<sequence length="341" mass="36036">MQKSYSLQELATQIGATVRGNTDVVVENIAPLDKAQSNQLTFISNVKFRVLLKDSKAGILIVSEEDVEHCSPESNLLIVKDPYVAYAILAQYMDSTPKAAQGIAKSAVIFDGVLLGENVSIGANAVIEEGVVLGDNVIIGANCFVGKNTKIGSGTQLWANVTVYHNVEIGANCLIQSGTVIGSDGFGYANDRGRWIKIPQVGQVIIGNNVEIGANTCIDRGALDATIIEDNVIIDNLCQIAHNVHIGTGTAVAGGVIMAGSLTVGRYCLIGGASVINGHMEICDKVTITGMGMVMRPITEPGVYSSGIPLQTNKEWRKTAALTLGIDGINKRLKALEKKIS</sequence>
<protein>
    <recommendedName>
        <fullName evidence="1">UDP-3-O-acylglucosamine N-acyltransferase</fullName>
        <ecNumber evidence="1">2.3.1.191</ecNumber>
    </recommendedName>
</protein>
<gene>
    <name evidence="1" type="primary">lpxD</name>
    <name type="ordered locus">HI_0915</name>
</gene>
<comment type="function">
    <text evidence="1">Catalyzes the N-acylation of UDP-3-O-acylglucosamine using 3-hydroxyacyl-ACP as the acyl donor. Is involved in the biosynthesis of lipid A, a phosphorylated glycolipid that anchors the lipopolysaccharide to the outer membrane of the cell.</text>
</comment>
<comment type="catalytic activity">
    <reaction evidence="1">
        <text>a UDP-3-O-[(3R)-3-hydroxyacyl]-alpha-D-glucosamine + a (3R)-hydroxyacyl-[ACP] = a UDP-2-N,3-O-bis[(3R)-3-hydroxyacyl]-alpha-D-glucosamine + holo-[ACP] + H(+)</text>
        <dbReference type="Rhea" id="RHEA:53836"/>
        <dbReference type="Rhea" id="RHEA-COMP:9685"/>
        <dbReference type="Rhea" id="RHEA-COMP:9945"/>
        <dbReference type="ChEBI" id="CHEBI:15378"/>
        <dbReference type="ChEBI" id="CHEBI:64479"/>
        <dbReference type="ChEBI" id="CHEBI:78827"/>
        <dbReference type="ChEBI" id="CHEBI:137740"/>
        <dbReference type="ChEBI" id="CHEBI:137748"/>
        <dbReference type="EC" id="2.3.1.191"/>
    </reaction>
</comment>
<comment type="pathway">
    <text evidence="1">Bacterial outer membrane biogenesis; LPS lipid A biosynthesis.</text>
</comment>
<comment type="subunit">
    <text evidence="1">Homotrimer.</text>
</comment>
<comment type="similarity">
    <text evidence="1">Belongs to the transferase hexapeptide repeat family. LpxD subfamily.</text>
</comment>
<feature type="chain" id="PRO_0000059677" description="UDP-3-O-acylglucosamine N-acyltransferase">
    <location>
        <begin position="1"/>
        <end position="341"/>
    </location>
</feature>
<feature type="active site" description="Proton acceptor" evidence="1">
    <location>
        <position position="242"/>
    </location>
</feature>
<reference key="1">
    <citation type="journal article" date="1995" name="Science">
        <title>Whole-genome random sequencing and assembly of Haemophilus influenzae Rd.</title>
        <authorList>
            <person name="Fleischmann R.D."/>
            <person name="Adams M.D."/>
            <person name="White O."/>
            <person name="Clayton R.A."/>
            <person name="Kirkness E.F."/>
            <person name="Kerlavage A.R."/>
            <person name="Bult C.J."/>
            <person name="Tomb J.-F."/>
            <person name="Dougherty B.A."/>
            <person name="Merrick J.M."/>
            <person name="McKenney K."/>
            <person name="Sutton G.G."/>
            <person name="FitzHugh W."/>
            <person name="Fields C.A."/>
            <person name="Gocayne J.D."/>
            <person name="Scott J.D."/>
            <person name="Shirley R."/>
            <person name="Liu L.-I."/>
            <person name="Glodek A."/>
            <person name="Kelley J.M."/>
            <person name="Weidman J.F."/>
            <person name="Phillips C.A."/>
            <person name="Spriggs T."/>
            <person name="Hedblom E."/>
            <person name="Cotton M.D."/>
            <person name="Utterback T.R."/>
            <person name="Hanna M.C."/>
            <person name="Nguyen D.T."/>
            <person name="Saudek D.M."/>
            <person name="Brandon R.C."/>
            <person name="Fine L.D."/>
            <person name="Fritchman J.L."/>
            <person name="Fuhrmann J.L."/>
            <person name="Geoghagen N.S.M."/>
            <person name="Gnehm C.L."/>
            <person name="McDonald L.A."/>
            <person name="Small K.V."/>
            <person name="Fraser C.M."/>
            <person name="Smith H.O."/>
            <person name="Venter J.C."/>
        </authorList>
    </citation>
    <scope>NUCLEOTIDE SEQUENCE [LARGE SCALE GENOMIC DNA]</scope>
    <source>
        <strain>ATCC 51907 / DSM 11121 / KW20 / Rd</strain>
    </source>
</reference>
<keyword id="KW-0012">Acyltransferase</keyword>
<keyword id="KW-0441">Lipid A biosynthesis</keyword>
<keyword id="KW-0444">Lipid biosynthesis</keyword>
<keyword id="KW-0443">Lipid metabolism</keyword>
<keyword id="KW-1185">Reference proteome</keyword>
<keyword id="KW-0677">Repeat</keyword>
<keyword id="KW-0808">Transferase</keyword>
<name>LPXD_HAEIN</name>